<proteinExistence type="inferred from homology"/>
<reference key="1">
    <citation type="journal article" date="1995" name="Science">
        <title>Whole-genome random sequencing and assembly of Haemophilus influenzae Rd.</title>
        <authorList>
            <person name="Fleischmann R.D."/>
            <person name="Adams M.D."/>
            <person name="White O."/>
            <person name="Clayton R.A."/>
            <person name="Kirkness E.F."/>
            <person name="Kerlavage A.R."/>
            <person name="Bult C.J."/>
            <person name="Tomb J.-F."/>
            <person name="Dougherty B.A."/>
            <person name="Merrick J.M."/>
            <person name="McKenney K."/>
            <person name="Sutton G.G."/>
            <person name="FitzHugh W."/>
            <person name="Fields C.A."/>
            <person name="Gocayne J.D."/>
            <person name="Scott J.D."/>
            <person name="Shirley R."/>
            <person name="Liu L.-I."/>
            <person name="Glodek A."/>
            <person name="Kelley J.M."/>
            <person name="Weidman J.F."/>
            <person name="Phillips C.A."/>
            <person name="Spriggs T."/>
            <person name="Hedblom E."/>
            <person name="Cotton M.D."/>
            <person name="Utterback T.R."/>
            <person name="Hanna M.C."/>
            <person name="Nguyen D.T."/>
            <person name="Saudek D.M."/>
            <person name="Brandon R.C."/>
            <person name="Fine L.D."/>
            <person name="Fritchman J.L."/>
            <person name="Fuhrmann J.L."/>
            <person name="Geoghagen N.S.M."/>
            <person name="Gnehm C.L."/>
            <person name="McDonald L.A."/>
            <person name="Small K.V."/>
            <person name="Fraser C.M."/>
            <person name="Smith H.O."/>
            <person name="Venter J.C."/>
        </authorList>
    </citation>
    <scope>NUCLEOTIDE SEQUENCE [LARGE SCALE GENOMIC DNA]</scope>
    <source>
        <strain>ATCC 51907 / DSM 11121 / KW20 / Rd</strain>
    </source>
</reference>
<gene>
    <name evidence="1" type="primary">rsgA</name>
    <name type="synonym">engC</name>
    <name type="ordered locus">HI_1714</name>
</gene>
<protein>
    <recommendedName>
        <fullName evidence="1">Small ribosomal subunit biogenesis GTPase RsgA</fullName>
        <ecNumber evidence="1">3.6.1.-</ecNumber>
    </recommendedName>
</protein>
<keyword id="KW-0963">Cytoplasm</keyword>
<keyword id="KW-0342">GTP-binding</keyword>
<keyword id="KW-0378">Hydrolase</keyword>
<keyword id="KW-0479">Metal-binding</keyword>
<keyword id="KW-0547">Nucleotide-binding</keyword>
<keyword id="KW-1185">Reference proteome</keyword>
<keyword id="KW-0690">Ribosome biogenesis</keyword>
<keyword id="KW-0694">RNA-binding</keyword>
<keyword id="KW-0699">rRNA-binding</keyword>
<keyword id="KW-0862">Zinc</keyword>
<accession>P45339</accession>
<feature type="chain" id="PRO_0000171480" description="Small ribosomal subunit biogenesis GTPase RsgA">
    <location>
        <begin position="1"/>
        <end position="346"/>
    </location>
</feature>
<feature type="domain" description="CP-type G" evidence="2">
    <location>
        <begin position="103"/>
        <end position="271"/>
    </location>
</feature>
<feature type="region of interest" description="Disordered" evidence="3">
    <location>
        <begin position="1"/>
        <end position="25"/>
    </location>
</feature>
<feature type="compositionally biased region" description="Polar residues" evidence="3">
    <location>
        <begin position="7"/>
        <end position="20"/>
    </location>
</feature>
<feature type="binding site" evidence="1">
    <location>
        <begin position="159"/>
        <end position="162"/>
    </location>
    <ligand>
        <name>GTP</name>
        <dbReference type="ChEBI" id="CHEBI:37565"/>
    </ligand>
</feature>
<feature type="binding site" evidence="1">
    <location>
        <begin position="213"/>
        <end position="221"/>
    </location>
    <ligand>
        <name>GTP</name>
        <dbReference type="ChEBI" id="CHEBI:37565"/>
    </ligand>
</feature>
<feature type="binding site" evidence="1">
    <location>
        <position position="295"/>
    </location>
    <ligand>
        <name>Zn(2+)</name>
        <dbReference type="ChEBI" id="CHEBI:29105"/>
    </ligand>
</feature>
<feature type="binding site" evidence="1">
    <location>
        <position position="300"/>
    </location>
    <ligand>
        <name>Zn(2+)</name>
        <dbReference type="ChEBI" id="CHEBI:29105"/>
    </ligand>
</feature>
<feature type="binding site" evidence="1">
    <location>
        <position position="302"/>
    </location>
    <ligand>
        <name>Zn(2+)</name>
        <dbReference type="ChEBI" id="CHEBI:29105"/>
    </ligand>
</feature>
<feature type="binding site" evidence="1">
    <location>
        <position position="308"/>
    </location>
    <ligand>
        <name>Zn(2+)</name>
        <dbReference type="ChEBI" id="CHEBI:29105"/>
    </ligand>
</feature>
<dbReference type="EC" id="3.6.1.-" evidence="1"/>
<dbReference type="EMBL" id="L42023">
    <property type="protein sequence ID" value="AAC23359.1"/>
    <property type="molecule type" value="Genomic_DNA"/>
</dbReference>
<dbReference type="PIR" id="B64176">
    <property type="entry name" value="B64176"/>
</dbReference>
<dbReference type="RefSeq" id="NP_439856.1">
    <property type="nucleotide sequence ID" value="NC_000907.1"/>
</dbReference>
<dbReference type="SMR" id="P45339"/>
<dbReference type="STRING" id="71421.HI_1714"/>
<dbReference type="EnsemblBacteria" id="AAC23359">
    <property type="protein sequence ID" value="AAC23359"/>
    <property type="gene ID" value="HI_1714"/>
</dbReference>
<dbReference type="KEGG" id="hin:HI_1714"/>
<dbReference type="PATRIC" id="fig|71421.8.peg.1793"/>
<dbReference type="eggNOG" id="COG1162">
    <property type="taxonomic scope" value="Bacteria"/>
</dbReference>
<dbReference type="HOGENOM" id="CLU_033617_2_0_6"/>
<dbReference type="OrthoDB" id="9809485at2"/>
<dbReference type="PhylomeDB" id="P45339"/>
<dbReference type="BioCyc" id="HINF71421:G1GJ1-1729-MONOMER"/>
<dbReference type="Proteomes" id="UP000000579">
    <property type="component" value="Chromosome"/>
</dbReference>
<dbReference type="GO" id="GO:0005737">
    <property type="term" value="C:cytoplasm"/>
    <property type="evidence" value="ECO:0007669"/>
    <property type="project" value="UniProtKB-SubCell"/>
</dbReference>
<dbReference type="GO" id="GO:0005525">
    <property type="term" value="F:GTP binding"/>
    <property type="evidence" value="ECO:0007669"/>
    <property type="project" value="UniProtKB-UniRule"/>
</dbReference>
<dbReference type="GO" id="GO:0003924">
    <property type="term" value="F:GTPase activity"/>
    <property type="evidence" value="ECO:0007669"/>
    <property type="project" value="UniProtKB-UniRule"/>
</dbReference>
<dbReference type="GO" id="GO:0046872">
    <property type="term" value="F:metal ion binding"/>
    <property type="evidence" value="ECO:0007669"/>
    <property type="project" value="UniProtKB-KW"/>
</dbReference>
<dbReference type="GO" id="GO:0019843">
    <property type="term" value="F:rRNA binding"/>
    <property type="evidence" value="ECO:0007669"/>
    <property type="project" value="UniProtKB-KW"/>
</dbReference>
<dbReference type="GO" id="GO:0042274">
    <property type="term" value="P:ribosomal small subunit biogenesis"/>
    <property type="evidence" value="ECO:0007669"/>
    <property type="project" value="UniProtKB-UniRule"/>
</dbReference>
<dbReference type="CDD" id="cd01854">
    <property type="entry name" value="YjeQ_EngC"/>
    <property type="match status" value="1"/>
</dbReference>
<dbReference type="Gene3D" id="2.40.50.140">
    <property type="entry name" value="Nucleic acid-binding proteins"/>
    <property type="match status" value="1"/>
</dbReference>
<dbReference type="Gene3D" id="3.40.50.300">
    <property type="entry name" value="P-loop containing nucleotide triphosphate hydrolases"/>
    <property type="match status" value="1"/>
</dbReference>
<dbReference type="Gene3D" id="1.10.40.50">
    <property type="entry name" value="Probable gtpase engc, domain 3"/>
    <property type="match status" value="1"/>
</dbReference>
<dbReference type="HAMAP" id="MF_01820">
    <property type="entry name" value="GTPase_RsgA"/>
    <property type="match status" value="1"/>
</dbReference>
<dbReference type="InterPro" id="IPR030378">
    <property type="entry name" value="G_CP_dom"/>
</dbReference>
<dbReference type="InterPro" id="IPR012340">
    <property type="entry name" value="NA-bd_OB-fold"/>
</dbReference>
<dbReference type="InterPro" id="IPR027417">
    <property type="entry name" value="P-loop_NTPase"/>
</dbReference>
<dbReference type="InterPro" id="IPR004881">
    <property type="entry name" value="Ribosome_biogen_GTPase_RsgA"/>
</dbReference>
<dbReference type="InterPro" id="IPR010914">
    <property type="entry name" value="RsgA_GTPase_dom"/>
</dbReference>
<dbReference type="NCBIfam" id="NF008931">
    <property type="entry name" value="PRK12288.1"/>
    <property type="match status" value="1"/>
</dbReference>
<dbReference type="NCBIfam" id="TIGR00157">
    <property type="entry name" value="ribosome small subunit-dependent GTPase A"/>
    <property type="match status" value="1"/>
</dbReference>
<dbReference type="PANTHER" id="PTHR32120">
    <property type="entry name" value="SMALL RIBOSOMAL SUBUNIT BIOGENESIS GTPASE RSGA"/>
    <property type="match status" value="1"/>
</dbReference>
<dbReference type="PANTHER" id="PTHR32120:SF11">
    <property type="entry name" value="SMALL RIBOSOMAL SUBUNIT BIOGENESIS GTPASE RSGA 1, MITOCHONDRIAL-RELATED"/>
    <property type="match status" value="1"/>
</dbReference>
<dbReference type="Pfam" id="PF03193">
    <property type="entry name" value="RsgA_GTPase"/>
    <property type="match status" value="1"/>
</dbReference>
<dbReference type="SUPFAM" id="SSF52540">
    <property type="entry name" value="P-loop containing nucleoside triphosphate hydrolases"/>
    <property type="match status" value="1"/>
</dbReference>
<dbReference type="PROSITE" id="PS50936">
    <property type="entry name" value="ENGC_GTPASE"/>
    <property type="match status" value="1"/>
</dbReference>
<dbReference type="PROSITE" id="PS51721">
    <property type="entry name" value="G_CP"/>
    <property type="match status" value="1"/>
</dbReference>
<comment type="function">
    <text evidence="1">One of several proteins that assist in the late maturation steps of the functional core of the 30S ribosomal subunit. Helps release RbfA from mature subunits. May play a role in the assembly of ribosomal proteins into the subunit. Circularly permuted GTPase that catalyzes slow GTP hydrolysis, GTPase activity is stimulated by the 30S ribosomal subunit.</text>
</comment>
<comment type="cofactor">
    <cofactor evidence="1">
        <name>Zn(2+)</name>
        <dbReference type="ChEBI" id="CHEBI:29105"/>
    </cofactor>
    <text evidence="1">Binds 1 zinc ion per subunit.</text>
</comment>
<comment type="subunit">
    <text evidence="1">Monomer. Associates with 30S ribosomal subunit, binds 16S rRNA.</text>
</comment>
<comment type="subcellular location">
    <subcellularLocation>
        <location evidence="1">Cytoplasm</location>
    </subcellularLocation>
</comment>
<comment type="similarity">
    <text evidence="1">Belongs to the TRAFAC class YlqF/YawG GTPase family. RsgA subfamily.</text>
</comment>
<evidence type="ECO:0000255" key="1">
    <source>
        <dbReference type="HAMAP-Rule" id="MF_01820"/>
    </source>
</evidence>
<evidence type="ECO:0000255" key="2">
    <source>
        <dbReference type="PROSITE-ProRule" id="PRU01058"/>
    </source>
</evidence>
<evidence type="ECO:0000256" key="3">
    <source>
        <dbReference type="SAM" id="MobiDB-lite"/>
    </source>
</evidence>
<name>RSGA_HAEIN</name>
<organism>
    <name type="scientific">Haemophilus influenzae (strain ATCC 51907 / DSM 11121 / KW20 / Rd)</name>
    <dbReference type="NCBI Taxonomy" id="71421"/>
    <lineage>
        <taxon>Bacteria</taxon>
        <taxon>Pseudomonadati</taxon>
        <taxon>Pseudomonadota</taxon>
        <taxon>Gammaproteobacteria</taxon>
        <taxon>Pasteurellales</taxon>
        <taxon>Pasteurellaceae</taxon>
        <taxon>Haemophilus</taxon>
    </lineage>
</organism>
<sequence>MAKRKLTQNQTRRIQSNNAKTLHRHKKKEIEWSDEMLGESQEGVVVTRYSIHADVENEQGEIYRCNLRRTLSSLVVGDKVVWRKGNEQLQGVSGVIEAIHPRENEISRPDYYDGLKPIAANIDRIIIVSAVLPTLSLNIIDRYLVVCEIAGITPLIVLNKVDLLAQEQRQEIEDQLKIYQDIGYEILMISAKSGENMEKLTALLAQGTAIFVGQSGVGKSSLINHILPSVNAQVGDVSETSGLGQHTTTSSRLYHLPQGGNLIDSPGIREFGLWHLDAEQITKGYREFQYVLGTCKFRDCKHLSDPGCALREAVEQGKISPVRYDNYHRLIESLSETKSQRHFSLV</sequence>